<evidence type="ECO:0000256" key="1">
    <source>
        <dbReference type="SAM" id="MobiDB-lite"/>
    </source>
</evidence>
<evidence type="ECO:0000269" key="2">
    <source>
    </source>
</evidence>
<evidence type="ECO:0000269" key="3">
    <source>
    </source>
</evidence>
<evidence type="ECO:0000305" key="4"/>
<keyword id="KW-0333">Golgi apparatus</keyword>
<keyword id="KW-0469">Meiosis</keyword>
<keyword id="KW-1185">Reference proteome</keyword>
<protein>
    <recommendedName>
        <fullName>Meiotically up-regulated gene 131 protein</fullName>
    </recommendedName>
</protein>
<gene>
    <name type="primary">mug131</name>
    <name type="ORF">SPBC1861.06c</name>
</gene>
<accession>Q9USY0</accession>
<sequence length="433" mass="49106">MDNQQRKVQGSSSNTFIKRAFQHLKSLFTVCFTGADYLESDIELICQNEIQPQGLEKLNADSSNFYCNSLTSNQSLTTSMEALDLSSSLTTPHADKLLKLSNLIAAKSFTTERKLSAAEFLDSREIHNPFTYGFLGILYGTSRTPYLHAQYANSFMSESAVPISIELNNREAKASMNLAEKNFPEGFEDFVSFLENPNIPLTVLLHHVMLYDLYSNNLKDAVWVAVTNYMKNLVGNYGYTELHIRAAQQMFGHPRFLLVHPEDIYCISGSSDWVCVSTQHFHCNIHVHSVSGNAIRKSRNPIIQDLSSICQNSTEFGWLALTHALRKKGAIFPIHAYLNFNAKLYEECIPPSILYFNKNDENINVGNIEDITNYMYETFINEASLCDKFMKRKHERIETPLSSQGREISNTLSRKRGAKGSNPFEIENMMPHA</sequence>
<proteinExistence type="evidence at protein level"/>
<dbReference type="EMBL" id="CU329671">
    <property type="protein sequence ID" value="CAB52742.1"/>
    <property type="molecule type" value="Genomic_DNA"/>
</dbReference>
<dbReference type="PIR" id="T39745">
    <property type="entry name" value="T39745"/>
</dbReference>
<dbReference type="RefSeq" id="NP_596723.1">
    <property type="nucleotide sequence ID" value="NM_001022648.2"/>
</dbReference>
<dbReference type="BioGRID" id="276261">
    <property type="interactions" value="4"/>
</dbReference>
<dbReference type="STRING" id="284812.Q9USY0"/>
<dbReference type="PaxDb" id="4896-SPBC1861.06c.1"/>
<dbReference type="EnsemblFungi" id="SPBC1861.06c.1">
    <property type="protein sequence ID" value="SPBC1861.06c.1:pep"/>
    <property type="gene ID" value="SPBC1861.06c"/>
</dbReference>
<dbReference type="GeneID" id="2539708"/>
<dbReference type="KEGG" id="spo:2539708"/>
<dbReference type="PomBase" id="SPBC1861.06c">
    <property type="gene designation" value="mug131"/>
</dbReference>
<dbReference type="VEuPathDB" id="FungiDB:SPBC1861.06c"/>
<dbReference type="HOGENOM" id="CLU_621356_0_0_1"/>
<dbReference type="InParanoid" id="Q9USY0"/>
<dbReference type="OMA" id="HFHCNIH"/>
<dbReference type="PhylomeDB" id="Q9USY0"/>
<dbReference type="PRO" id="PR:Q9USY0"/>
<dbReference type="Proteomes" id="UP000002485">
    <property type="component" value="Chromosome II"/>
</dbReference>
<dbReference type="GO" id="GO:0005794">
    <property type="term" value="C:Golgi apparatus"/>
    <property type="evidence" value="ECO:0007005"/>
    <property type="project" value="PomBase"/>
</dbReference>
<dbReference type="GO" id="GO:0051321">
    <property type="term" value="P:meiotic cell cycle"/>
    <property type="evidence" value="ECO:0007669"/>
    <property type="project" value="UniProtKB-KW"/>
</dbReference>
<dbReference type="InterPro" id="IPR013903">
    <property type="entry name" value="Meiotic_expression"/>
</dbReference>
<dbReference type="Pfam" id="PF08594">
    <property type="entry name" value="UPF0300"/>
    <property type="match status" value="1"/>
</dbReference>
<feature type="chain" id="PRO_0000118861" description="Meiotically up-regulated gene 131 protein">
    <location>
        <begin position="1"/>
        <end position="433"/>
    </location>
</feature>
<feature type="region of interest" description="Disordered" evidence="1">
    <location>
        <begin position="401"/>
        <end position="433"/>
    </location>
</feature>
<feature type="compositionally biased region" description="Polar residues" evidence="1">
    <location>
        <begin position="401"/>
        <end position="412"/>
    </location>
</feature>
<comment type="function">
    <text evidence="2">Has a role in meiosis.</text>
</comment>
<comment type="subcellular location">
    <subcellularLocation>
        <location evidence="3">Golgi apparatus</location>
    </subcellularLocation>
</comment>
<comment type="similarity">
    <text evidence="4">Belongs to the UPF0300 family.</text>
</comment>
<reference key="1">
    <citation type="journal article" date="2002" name="Nature">
        <title>The genome sequence of Schizosaccharomyces pombe.</title>
        <authorList>
            <person name="Wood V."/>
            <person name="Gwilliam R."/>
            <person name="Rajandream M.A."/>
            <person name="Lyne M.H."/>
            <person name="Lyne R."/>
            <person name="Stewart A."/>
            <person name="Sgouros J.G."/>
            <person name="Peat N."/>
            <person name="Hayles J."/>
            <person name="Baker S.G."/>
            <person name="Basham D."/>
            <person name="Bowman S."/>
            <person name="Brooks K."/>
            <person name="Brown D."/>
            <person name="Brown S."/>
            <person name="Chillingworth T."/>
            <person name="Churcher C.M."/>
            <person name="Collins M."/>
            <person name="Connor R."/>
            <person name="Cronin A."/>
            <person name="Davis P."/>
            <person name="Feltwell T."/>
            <person name="Fraser A."/>
            <person name="Gentles S."/>
            <person name="Goble A."/>
            <person name="Hamlin N."/>
            <person name="Harris D.E."/>
            <person name="Hidalgo J."/>
            <person name="Hodgson G."/>
            <person name="Holroyd S."/>
            <person name="Hornsby T."/>
            <person name="Howarth S."/>
            <person name="Huckle E.J."/>
            <person name="Hunt S."/>
            <person name="Jagels K."/>
            <person name="James K.D."/>
            <person name="Jones L."/>
            <person name="Jones M."/>
            <person name="Leather S."/>
            <person name="McDonald S."/>
            <person name="McLean J."/>
            <person name="Mooney P."/>
            <person name="Moule S."/>
            <person name="Mungall K.L."/>
            <person name="Murphy L.D."/>
            <person name="Niblett D."/>
            <person name="Odell C."/>
            <person name="Oliver K."/>
            <person name="O'Neil S."/>
            <person name="Pearson D."/>
            <person name="Quail M.A."/>
            <person name="Rabbinowitsch E."/>
            <person name="Rutherford K.M."/>
            <person name="Rutter S."/>
            <person name="Saunders D."/>
            <person name="Seeger K."/>
            <person name="Sharp S."/>
            <person name="Skelton J."/>
            <person name="Simmonds M.N."/>
            <person name="Squares R."/>
            <person name="Squares S."/>
            <person name="Stevens K."/>
            <person name="Taylor K."/>
            <person name="Taylor R.G."/>
            <person name="Tivey A."/>
            <person name="Walsh S.V."/>
            <person name="Warren T."/>
            <person name="Whitehead S."/>
            <person name="Woodward J.R."/>
            <person name="Volckaert G."/>
            <person name="Aert R."/>
            <person name="Robben J."/>
            <person name="Grymonprez B."/>
            <person name="Weltjens I."/>
            <person name="Vanstreels E."/>
            <person name="Rieger M."/>
            <person name="Schaefer M."/>
            <person name="Mueller-Auer S."/>
            <person name="Gabel C."/>
            <person name="Fuchs M."/>
            <person name="Duesterhoeft A."/>
            <person name="Fritzc C."/>
            <person name="Holzer E."/>
            <person name="Moestl D."/>
            <person name="Hilbert H."/>
            <person name="Borzym K."/>
            <person name="Langer I."/>
            <person name="Beck A."/>
            <person name="Lehrach H."/>
            <person name="Reinhardt R."/>
            <person name="Pohl T.M."/>
            <person name="Eger P."/>
            <person name="Zimmermann W."/>
            <person name="Wedler H."/>
            <person name="Wambutt R."/>
            <person name="Purnelle B."/>
            <person name="Goffeau A."/>
            <person name="Cadieu E."/>
            <person name="Dreano S."/>
            <person name="Gloux S."/>
            <person name="Lelaure V."/>
            <person name="Mottier S."/>
            <person name="Galibert F."/>
            <person name="Aves S.J."/>
            <person name="Xiang Z."/>
            <person name="Hunt C."/>
            <person name="Moore K."/>
            <person name="Hurst S.M."/>
            <person name="Lucas M."/>
            <person name="Rochet M."/>
            <person name="Gaillardin C."/>
            <person name="Tallada V.A."/>
            <person name="Garzon A."/>
            <person name="Thode G."/>
            <person name="Daga R.R."/>
            <person name="Cruzado L."/>
            <person name="Jimenez J."/>
            <person name="Sanchez M."/>
            <person name="del Rey F."/>
            <person name="Benito J."/>
            <person name="Dominguez A."/>
            <person name="Revuelta J.L."/>
            <person name="Moreno S."/>
            <person name="Armstrong J."/>
            <person name="Forsburg S.L."/>
            <person name="Cerutti L."/>
            <person name="Lowe T."/>
            <person name="McCombie W.R."/>
            <person name="Paulsen I."/>
            <person name="Potashkin J."/>
            <person name="Shpakovski G.V."/>
            <person name="Ussery D."/>
            <person name="Barrell B.G."/>
            <person name="Nurse P."/>
        </authorList>
    </citation>
    <scope>NUCLEOTIDE SEQUENCE [LARGE SCALE GENOMIC DNA]</scope>
    <source>
        <strain>972 / ATCC 24843</strain>
    </source>
</reference>
<reference key="2">
    <citation type="journal article" date="2005" name="Curr. Biol.">
        <title>A large-scale screen in S. pombe identifies seven novel genes required for critical meiotic events.</title>
        <authorList>
            <person name="Martin-Castellanos C."/>
            <person name="Blanco M."/>
            <person name="Rozalen A.E."/>
            <person name="Perez-Hidalgo L."/>
            <person name="Garcia A.I."/>
            <person name="Conde F."/>
            <person name="Mata J."/>
            <person name="Ellermeier C."/>
            <person name="Davis L."/>
            <person name="San-Segundo P."/>
            <person name="Smith G.R."/>
            <person name="Moreno S."/>
        </authorList>
    </citation>
    <scope>FUNCTION IN MEIOSIS</scope>
</reference>
<reference key="3">
    <citation type="journal article" date="2006" name="Nat. Biotechnol.">
        <title>ORFeome cloning and global analysis of protein localization in the fission yeast Schizosaccharomyces pombe.</title>
        <authorList>
            <person name="Matsuyama A."/>
            <person name="Arai R."/>
            <person name="Yashiroda Y."/>
            <person name="Shirai A."/>
            <person name="Kamata A."/>
            <person name="Sekido S."/>
            <person name="Kobayashi Y."/>
            <person name="Hashimoto A."/>
            <person name="Hamamoto M."/>
            <person name="Hiraoka Y."/>
            <person name="Horinouchi S."/>
            <person name="Yoshida M."/>
        </authorList>
    </citation>
    <scope>SUBCELLULAR LOCATION [LARGE SCALE ANALYSIS]</scope>
</reference>
<name>MU131_SCHPO</name>
<organism>
    <name type="scientific">Schizosaccharomyces pombe (strain 972 / ATCC 24843)</name>
    <name type="common">Fission yeast</name>
    <dbReference type="NCBI Taxonomy" id="284812"/>
    <lineage>
        <taxon>Eukaryota</taxon>
        <taxon>Fungi</taxon>
        <taxon>Dikarya</taxon>
        <taxon>Ascomycota</taxon>
        <taxon>Taphrinomycotina</taxon>
        <taxon>Schizosaccharomycetes</taxon>
        <taxon>Schizosaccharomycetales</taxon>
        <taxon>Schizosaccharomycetaceae</taxon>
        <taxon>Schizosaccharomyces</taxon>
    </lineage>
</organism>